<feature type="signal peptide" evidence="2">
    <location>
        <begin position="1"/>
        <end position="19"/>
    </location>
</feature>
<feature type="propeptide" id="PRO_0000425175" evidence="1">
    <location>
        <begin position="20"/>
        <end position="44"/>
    </location>
</feature>
<feature type="peptide" id="PRO_0000425176" description="Conotoxin Vc6.13">
    <location>
        <begin position="46"/>
        <end position="81"/>
    </location>
</feature>
<feature type="disulfide bond" evidence="1">
    <location>
        <begin position="49"/>
        <end position="63"/>
    </location>
</feature>
<feature type="disulfide bond" evidence="1">
    <location>
        <begin position="56"/>
        <end position="67"/>
    </location>
</feature>
<feature type="disulfide bond" evidence="1">
    <location>
        <begin position="62"/>
        <end position="72"/>
    </location>
</feature>
<organism>
    <name type="scientific">Conus victoriae</name>
    <name type="common">Queen Victoria cone</name>
    <dbReference type="NCBI Taxonomy" id="319920"/>
    <lineage>
        <taxon>Eukaryota</taxon>
        <taxon>Metazoa</taxon>
        <taxon>Spiralia</taxon>
        <taxon>Lophotrochozoa</taxon>
        <taxon>Mollusca</taxon>
        <taxon>Gastropoda</taxon>
        <taxon>Caenogastropoda</taxon>
        <taxon>Neogastropoda</taxon>
        <taxon>Conoidea</taxon>
        <taxon>Conidae</taxon>
        <taxon>Conus</taxon>
        <taxon>Cylinder</taxon>
    </lineage>
</organism>
<sequence>MEKLTILLLVAAVLMSIQALNQEQHQRAKINLLSKRKAPAERWWRWGGCLLWFGRCTKDSECCSDSCDRTYCELARFPEGW</sequence>
<proteinExistence type="evidence at transcript level"/>
<evidence type="ECO:0000250" key="1"/>
<evidence type="ECO:0000255" key="2"/>
<evidence type="ECO:0000269" key="3">
    <source>
    </source>
</evidence>
<evidence type="ECO:0000305" key="4"/>
<accession>G1AS79</accession>
<protein>
    <recommendedName>
        <fullName>Conotoxin Vc6.13</fullName>
    </recommendedName>
</protein>
<reference key="1">
    <citation type="journal article" date="2011" name="J. Biol. Chem.">
        <title>Embryonic toxin expression in the cone snail Conus victoriae: primed to kill or divergent function?</title>
        <authorList>
            <person name="Safavi-Hemami H."/>
            <person name="Siero W.A."/>
            <person name="Kuang Z."/>
            <person name="Williamson N.A."/>
            <person name="Karas J.A."/>
            <person name="Page L.R."/>
            <person name="Macmillan D."/>
            <person name="Callaghan B."/>
            <person name="Kompella S.N."/>
            <person name="Adams D.J."/>
            <person name="Norton R.S."/>
            <person name="Purcell A.W."/>
        </authorList>
    </citation>
    <scope>NUCLEOTIDE SEQUENCE [MRNA]</scope>
    <scope>DEVELOPMENTAL STAGE</scope>
    <source>
        <tissue>Embryo</tissue>
        <tissue>Venom duct</tissue>
    </source>
</reference>
<keyword id="KW-1015">Disulfide bond</keyword>
<keyword id="KW-0872">Ion channel impairing toxin</keyword>
<keyword id="KW-0960">Knottin</keyword>
<keyword id="KW-0964">Secreted</keyword>
<keyword id="KW-0732">Signal</keyword>
<keyword id="KW-0800">Toxin</keyword>
<name>O26D_CONVC</name>
<comment type="function">
    <text evidence="1">Inhibits voltage-gated ion channels.</text>
</comment>
<comment type="subcellular location">
    <subcellularLocation>
        <location evidence="1">Secreted</location>
    </subcellularLocation>
</comment>
<comment type="tissue specificity">
    <text>Expressed by the venom duct.</text>
</comment>
<comment type="developmental stage">
    <text evidence="3">Only expressed in embryos.</text>
</comment>
<comment type="domain">
    <text evidence="1">The presence of a 'disulfide through disulfide knot' structurally defines this protein as a knottin.</text>
</comment>
<comment type="domain">
    <text>The cysteine framework is VI/VII (C-C-CC-C-C).</text>
</comment>
<comment type="similarity">
    <text evidence="4">Belongs to the conotoxin O2 superfamily.</text>
</comment>
<dbReference type="EMBL" id="JF433906">
    <property type="protein sequence ID" value="AEA35362.1"/>
    <property type="molecule type" value="mRNA"/>
</dbReference>
<dbReference type="ConoServer" id="4274">
    <property type="toxin name" value="Vc6.13 precursor"/>
</dbReference>
<dbReference type="GO" id="GO:0005576">
    <property type="term" value="C:extracellular region"/>
    <property type="evidence" value="ECO:0007669"/>
    <property type="project" value="UniProtKB-SubCell"/>
</dbReference>
<dbReference type="GO" id="GO:0008200">
    <property type="term" value="F:ion channel inhibitor activity"/>
    <property type="evidence" value="ECO:0007669"/>
    <property type="project" value="InterPro"/>
</dbReference>
<dbReference type="GO" id="GO:0090729">
    <property type="term" value="F:toxin activity"/>
    <property type="evidence" value="ECO:0007669"/>
    <property type="project" value="UniProtKB-KW"/>
</dbReference>
<dbReference type="InterPro" id="IPR004214">
    <property type="entry name" value="Conotoxin"/>
</dbReference>
<dbReference type="Pfam" id="PF02950">
    <property type="entry name" value="Conotoxin"/>
    <property type="match status" value="1"/>
</dbReference>